<feature type="chain" id="PRO_0000310163" description="Nascent polypeptide-associated complex subunit alpha">
    <location>
        <begin position="1"/>
        <end position="169"/>
    </location>
</feature>
<feature type="domain" description="NAC-A/B" evidence="2">
    <location>
        <begin position="14"/>
        <end position="78"/>
    </location>
</feature>
<feature type="domain" description="UBA">
    <location>
        <begin position="130"/>
        <end position="169"/>
    </location>
</feature>
<feature type="region of interest" description="Disordered" evidence="3">
    <location>
        <begin position="85"/>
        <end position="128"/>
    </location>
</feature>
<gene>
    <name type="primary">EGD2</name>
    <name type="ORF">Kpol_1028p76</name>
</gene>
<name>NACA_VANPO</name>
<organism>
    <name type="scientific">Vanderwaltozyma polyspora (strain ATCC 22028 / DSM 70294 / BCRC 21397 / CBS 2163 / NBRC 10782 / NRRL Y-8283 / UCD 57-17)</name>
    <name type="common">Kluyveromyces polysporus</name>
    <dbReference type="NCBI Taxonomy" id="436907"/>
    <lineage>
        <taxon>Eukaryota</taxon>
        <taxon>Fungi</taxon>
        <taxon>Dikarya</taxon>
        <taxon>Ascomycota</taxon>
        <taxon>Saccharomycotina</taxon>
        <taxon>Saccharomycetes</taxon>
        <taxon>Saccharomycetales</taxon>
        <taxon>Saccharomycetaceae</taxon>
        <taxon>Vanderwaltozyma</taxon>
    </lineage>
</organism>
<comment type="function">
    <text evidence="1">Component of the nascent polypeptide-associated complex (NAC), a dynamic component of the ribosomal exit tunnel, protecting the emerging polypeptides from interaction with other cytoplasmic proteins to ensure appropriate nascent protein targeting. The NAC complex also promotes mitochondrial protein import by enhancing productive ribosome interactions with the outer mitochondrial membrane and blocks the inappropriate interaction of ribosomes translating non-secretory nascent polypeptides with translocation sites in the membrane of the endoplasmic reticulum. EGD2 may also be involved in transcription regulation (By similarity).</text>
</comment>
<comment type="subunit">
    <text evidence="1">Part of the nascent polypeptide-associated complex (NAC), consisting of EGD2 and EGD1. NAC associates with ribosomes via EGD1 (By similarity).</text>
</comment>
<comment type="subcellular location">
    <subcellularLocation>
        <location evidence="1">Cytoplasm</location>
    </subcellularLocation>
    <subcellularLocation>
        <location evidence="1">Nucleus</location>
    </subcellularLocation>
    <text evidence="1">Predominantly cytoplasmic, may also transiently localize to the nucleus.</text>
</comment>
<comment type="similarity">
    <text evidence="4">Belongs to the NAC-alpha family.</text>
</comment>
<reference key="1">
    <citation type="journal article" date="2007" name="Proc. Natl. Acad. Sci. U.S.A.">
        <title>Independent sorting-out of thousands of duplicated gene pairs in two yeast species descended from a whole-genome duplication.</title>
        <authorList>
            <person name="Scannell D.R."/>
            <person name="Frank A.C."/>
            <person name="Conant G.C."/>
            <person name="Byrne K.P."/>
            <person name="Woolfit M."/>
            <person name="Wolfe K.H."/>
        </authorList>
    </citation>
    <scope>NUCLEOTIDE SEQUENCE [LARGE SCALE GENOMIC DNA]</scope>
    <source>
        <strain>ATCC 22028 / DSM 70294 / BCRC 21397 / CBS 2163 / NBRC 10782 / NRRL Y-8283 / UCD 57-17</strain>
    </source>
</reference>
<evidence type="ECO:0000250" key="1"/>
<evidence type="ECO:0000255" key="2">
    <source>
        <dbReference type="PROSITE-ProRule" id="PRU00507"/>
    </source>
</evidence>
<evidence type="ECO:0000256" key="3">
    <source>
        <dbReference type="SAM" id="MobiDB-lite"/>
    </source>
</evidence>
<evidence type="ECO:0000305" key="4"/>
<sequence>MSAIPEGSNVTVLNKNEKKAREMISKLGLKKIAGINRVTFRKKDNQIFAIDNPEVYRSQGGNYVVFGEAKIDNFSQKLAAAQEKIQSVSKSPEEIQKDMQLAADQAGDESAKPAAAAEEDDEAPVDAGDLSAEDIELVASQANVSKNKAIKALKEHNGDIVNAIMALSK</sequence>
<dbReference type="EMBL" id="DS480385">
    <property type="protein sequence ID" value="EDO18800.1"/>
    <property type="molecule type" value="Genomic_DNA"/>
</dbReference>
<dbReference type="RefSeq" id="XP_001646658.1">
    <property type="nucleotide sequence ID" value="XM_001646608.1"/>
</dbReference>
<dbReference type="SMR" id="A7TG43"/>
<dbReference type="FunCoup" id="A7TG43">
    <property type="interactions" value="631"/>
</dbReference>
<dbReference type="STRING" id="436907.A7TG43"/>
<dbReference type="GeneID" id="5547116"/>
<dbReference type="KEGG" id="vpo:Kpol_1028p76"/>
<dbReference type="eggNOG" id="KOG2239">
    <property type="taxonomic scope" value="Eukaryota"/>
</dbReference>
<dbReference type="HOGENOM" id="CLU_057806_2_1_1"/>
<dbReference type="InParanoid" id="A7TG43"/>
<dbReference type="OMA" id="SQKMIFA"/>
<dbReference type="OrthoDB" id="3169036at2759"/>
<dbReference type="PhylomeDB" id="A7TG43"/>
<dbReference type="Proteomes" id="UP000000267">
    <property type="component" value="Unassembled WGS sequence"/>
</dbReference>
<dbReference type="GO" id="GO:0005854">
    <property type="term" value="C:nascent polypeptide-associated complex"/>
    <property type="evidence" value="ECO:0007669"/>
    <property type="project" value="InterPro"/>
</dbReference>
<dbReference type="GO" id="GO:0005634">
    <property type="term" value="C:nucleus"/>
    <property type="evidence" value="ECO:0007669"/>
    <property type="project" value="UniProtKB-SubCell"/>
</dbReference>
<dbReference type="GO" id="GO:0015031">
    <property type="term" value="P:protein transport"/>
    <property type="evidence" value="ECO:0007669"/>
    <property type="project" value="UniProtKB-KW"/>
</dbReference>
<dbReference type="CDD" id="cd22054">
    <property type="entry name" value="NAC_NACA"/>
    <property type="match status" value="1"/>
</dbReference>
<dbReference type="CDD" id="cd14358">
    <property type="entry name" value="UBA_NAC_euk"/>
    <property type="match status" value="1"/>
</dbReference>
<dbReference type="FunFam" id="2.20.70.30:FF:000002">
    <property type="entry name" value="Nascent polypeptide-associated complex (NAC), alpha subunit"/>
    <property type="match status" value="1"/>
</dbReference>
<dbReference type="Gene3D" id="1.10.8.10">
    <property type="entry name" value="DNA helicase RuvA subunit, C-terminal domain"/>
    <property type="match status" value="1"/>
</dbReference>
<dbReference type="Gene3D" id="2.20.70.30">
    <property type="entry name" value="Nascent polypeptide-associated complex domain"/>
    <property type="match status" value="1"/>
</dbReference>
<dbReference type="InterPro" id="IPR016641">
    <property type="entry name" value="EGD2/NACA0like"/>
</dbReference>
<dbReference type="InterPro" id="IPR044034">
    <property type="entry name" value="NAC-like_UBA"/>
</dbReference>
<dbReference type="InterPro" id="IPR038187">
    <property type="entry name" value="NAC_A/B_dom_sf"/>
</dbReference>
<dbReference type="InterPro" id="IPR002715">
    <property type="entry name" value="Nas_poly-pep-assoc_cplx_dom"/>
</dbReference>
<dbReference type="InterPro" id="IPR009060">
    <property type="entry name" value="UBA-like_sf"/>
</dbReference>
<dbReference type="PANTHER" id="PTHR21713">
    <property type="entry name" value="NASCENT POLYPEPTIDE ASSOCIATED COMPLEX ALPHA SUBUNIT-RELATED"/>
    <property type="match status" value="1"/>
</dbReference>
<dbReference type="Pfam" id="PF01849">
    <property type="entry name" value="NAC"/>
    <property type="match status" value="1"/>
</dbReference>
<dbReference type="Pfam" id="PF19026">
    <property type="entry name" value="UBA_HYPK"/>
    <property type="match status" value="1"/>
</dbReference>
<dbReference type="PIRSF" id="PIRSF015901">
    <property type="entry name" value="NAC_alpha"/>
    <property type="match status" value="1"/>
</dbReference>
<dbReference type="SMART" id="SM01407">
    <property type="entry name" value="NAC"/>
    <property type="match status" value="1"/>
</dbReference>
<dbReference type="SUPFAM" id="SSF46934">
    <property type="entry name" value="UBA-like"/>
    <property type="match status" value="1"/>
</dbReference>
<dbReference type="PROSITE" id="PS51151">
    <property type="entry name" value="NAC_AB"/>
    <property type="match status" value="1"/>
</dbReference>
<accession>A7TG43</accession>
<proteinExistence type="inferred from homology"/>
<protein>
    <recommendedName>
        <fullName>Nascent polypeptide-associated complex subunit alpha</fullName>
        <shortName>NAC-alpha</shortName>
    </recommendedName>
    <alternativeName>
        <fullName>Alpha-NAC</fullName>
    </alternativeName>
</protein>
<keyword id="KW-0963">Cytoplasm</keyword>
<keyword id="KW-0539">Nucleus</keyword>
<keyword id="KW-0653">Protein transport</keyword>
<keyword id="KW-1185">Reference proteome</keyword>
<keyword id="KW-0813">Transport</keyword>